<reference key="1">
    <citation type="journal article" date="1996" name="J. Biol. Chem.">
        <title>Novel proteins that interact with the COOH-terminal cytosolic routing determinants of an integral membrane peptide-processing enzyme.</title>
        <authorList>
            <person name="Alam M.R."/>
            <person name="Caldwell B.D."/>
            <person name="Johnson R.C."/>
            <person name="Darlington D.N."/>
            <person name="Mains R.E."/>
            <person name="Eipper B.A."/>
        </authorList>
    </citation>
    <scope>NUCLEOTIDE SEQUENCE [MRNA] (ISOFORM 2)</scope>
    <source>
        <tissue>Hippocampus</tissue>
    </source>
</reference>
<reference key="2">
    <citation type="journal article" date="1997" name="J. Biol. Chem.">
        <title>Kalirin, a cytosolic protein with spectrin-like and GDP/GTP exchange factor-like domains that interacts with peptidylglycine alpha-amidating monooxygenase, an integral membrane peptide-processing enzyme.</title>
        <authorList>
            <person name="Alam M.R."/>
            <person name="Johnson R.C."/>
            <person name="Darlington D.N."/>
            <person name="Hand T.A."/>
            <person name="Mains R.E."/>
            <person name="Eipper B.A."/>
        </authorList>
    </citation>
    <scope>NUCLEOTIDE SEQUENCE [MRNA] (ISOFORMS 2 AND 3)</scope>
    <scope>INTERACTION WITH PAM</scope>
    <source>
        <tissue>Hippocampus</tissue>
    </source>
</reference>
<reference key="3">
    <citation type="journal article" date="2000" name="J. Biol. Chem.">
        <title>An isoform of kalirin, a brain-specific GDP/GTP exchange factor, is enriched in the postsynaptic density fraction.</title>
        <authorList>
            <person name="Penzes P."/>
            <person name="Johnson R.C."/>
            <person name="Alam M.R."/>
            <person name="Kambampati V."/>
            <person name="Mains R.E."/>
            <person name="Eipper B.A."/>
        </authorList>
    </citation>
    <scope>NUCLEOTIDE SEQUENCE [MRNA] (ISOFORM 6)</scope>
    <scope>FUNCTION</scope>
    <scope>SUBCELLULAR LOCATION</scope>
    <scope>TISSUE SPECIFICITY</scope>
</reference>
<reference key="4">
    <citation type="journal article" date="2000" name="J. Biol. Chem.">
        <title>Isoforms of kalirin, a neuronal Dbl family member, generated through use of different 5'- and 3'-ends along with an internal translational initiation site.</title>
        <authorList>
            <person name="Johnson R.C."/>
            <person name="Penzes P."/>
            <person name="Eipper B.A."/>
            <person name="Mains R.E."/>
        </authorList>
    </citation>
    <scope>NUCLEOTIDE SEQUENCE [MRNA] (ISOFORMS 1; 5 AND 7)</scope>
    <scope>ALTERNATIVE INITIATION</scope>
    <scope>SUBCELLULAR LOCATION</scope>
    <scope>TISSUE SPECIFICITY</scope>
</reference>
<reference key="5">
    <citation type="journal article" date="2005" name="Exp. Cell Res.">
        <title>Induction of lamellipodia by Kalirin does not require its guanine nucleotide exchange factor activity.</title>
        <authorList>
            <person name="Schiller M.R."/>
            <person name="Blangy A."/>
            <person name="Huang J."/>
            <person name="Mains R.E."/>
            <person name="Eipper B.A."/>
        </authorList>
    </citation>
    <scope>NUCLEOTIDE SEQUENCE [MRNA] (ISOFORM 8)</scope>
    <scope>FUNCTION</scope>
</reference>
<reference key="6">
    <citation type="journal article" date="1997" name="Hum. Mol. Genet.">
        <title>Huntingtin-associated protein 1 (HAP1) binds to a Trio-like polypeptide, with a rac1 guanine nucleotide exchange factor domain.</title>
        <authorList>
            <person name="Colomer V."/>
            <person name="Engelender S."/>
            <person name="Sharp A.H."/>
            <person name="Duan K."/>
            <person name="Cooper J.K."/>
            <person name="Lanahan A."/>
            <person name="Lyford G."/>
            <person name="Worley P."/>
            <person name="Ross C.A."/>
        </authorList>
    </citation>
    <scope>NUCLEOTIDE SEQUENCE [MRNA] OF 638-1216 (ISOFORM 4)</scope>
    <source>
        <tissue>Brain cortex</tissue>
        <tissue>Hippocampus</tissue>
    </source>
</reference>
<reference key="7">
    <citation type="journal article" date="2001" name="J. Neurosci.">
        <title>Distinct roles for the two Rho GDP/GTP exchange factor domains of kalirin in regulation of neurite growth and neuronal morphology.</title>
        <authorList>
            <person name="Penzes P."/>
            <person name="Johnson R.C."/>
            <person name="Kambampati V."/>
            <person name="Mains R.E."/>
            <person name="Eipper B.A."/>
        </authorList>
    </citation>
    <scope>FUNCTION</scope>
    <scope>DOMAIN</scope>
    <scope>DEVELOPMENTAL STAGE</scope>
</reference>
<reference key="8">
    <citation type="journal article" date="2012" name="Nat. Commun.">
        <title>Quantitative maps of protein phosphorylation sites across 14 different rat organs and tissues.</title>
        <authorList>
            <person name="Lundby A."/>
            <person name="Secher A."/>
            <person name="Lage K."/>
            <person name="Nordsborg N.B."/>
            <person name="Dmytriyev A."/>
            <person name="Lundby C."/>
            <person name="Olsen J.V."/>
        </authorList>
    </citation>
    <scope>PHOSPHORYLATION [LARGE SCALE ANALYSIS] AT SER-1772; THR-1785 AND SER-1790</scope>
    <scope>IDENTIFICATION BY MASS SPECTROMETRY [LARGE SCALE ANALYSIS]</scope>
</reference>
<reference key="9">
    <citation type="journal article" date="2006" name="J. Biol. Chem.">
        <title>Regulation of RhoGEF activity by intramolecular and intermolecular SH3 domain interactions.</title>
        <authorList>
            <person name="Schiller M.R."/>
            <person name="Chakrabarti K."/>
            <person name="King G.F."/>
            <person name="Schiller N.I."/>
            <person name="Eipper B.A."/>
            <person name="Maciejewski M.W."/>
        </authorList>
    </citation>
    <scope>STRUCTURE BY NMR OF 1617-1707</scope>
    <scope>DOMAIN</scope>
    <scope>INTERACTION WITH CRK1</scope>
</reference>
<name>KALRN_RAT</name>
<gene>
    <name evidence="26" type="primary">Kalrn</name>
    <name type="synonym">Duo</name>
    <name type="synonym">Hapip</name>
</gene>
<comment type="function">
    <text evidence="14 16 17">Promotes the exchange of GDP by GTP. Activates specific Rho GTPase family members, thereby inducing various signaling mechanisms that regulate neuronal shape, growth, and plasticity, through their effects on the actin cytoskeleton. Induces lamellipodia independent of its GEF activity. Isoforms 1 and 7 are necessary for neuronal development and axonal outgrowth. Isoform 6 is required for dendritic spine formation.</text>
</comment>
<comment type="catalytic activity">
    <reaction>
        <text>L-seryl-[protein] + ATP = O-phospho-L-seryl-[protein] + ADP + H(+)</text>
        <dbReference type="Rhea" id="RHEA:17989"/>
        <dbReference type="Rhea" id="RHEA-COMP:9863"/>
        <dbReference type="Rhea" id="RHEA-COMP:11604"/>
        <dbReference type="ChEBI" id="CHEBI:15378"/>
        <dbReference type="ChEBI" id="CHEBI:29999"/>
        <dbReference type="ChEBI" id="CHEBI:30616"/>
        <dbReference type="ChEBI" id="CHEBI:83421"/>
        <dbReference type="ChEBI" id="CHEBI:456216"/>
        <dbReference type="EC" id="2.7.11.1"/>
    </reaction>
</comment>
<comment type="catalytic activity">
    <reaction>
        <text>L-threonyl-[protein] + ATP = O-phospho-L-threonyl-[protein] + ADP + H(+)</text>
        <dbReference type="Rhea" id="RHEA:46608"/>
        <dbReference type="Rhea" id="RHEA-COMP:11060"/>
        <dbReference type="Rhea" id="RHEA-COMP:11605"/>
        <dbReference type="ChEBI" id="CHEBI:15378"/>
        <dbReference type="ChEBI" id="CHEBI:30013"/>
        <dbReference type="ChEBI" id="CHEBI:30616"/>
        <dbReference type="ChEBI" id="CHEBI:61977"/>
        <dbReference type="ChEBI" id="CHEBI:456216"/>
        <dbReference type="EC" id="2.7.11.1"/>
    </reaction>
</comment>
<comment type="cofactor">
    <cofactor evidence="1">
        <name>Mg(2+)</name>
        <dbReference type="ChEBI" id="CHEBI:18420"/>
    </cofactor>
</comment>
<comment type="subunit">
    <text evidence="1">Interacts with the C-terminal of peptidylglycine alpha-amidating monooxygenase (PAM) and with the huntingtin-associated protein 1 (HAP1). Interacts with FASLG (By similarity).</text>
</comment>
<comment type="interaction">
    <interactant intactId="EBI-1397166">
        <id>P97924</id>
    </interactant>
    <interactant intactId="EBI-994539">
        <id>P54256</id>
        <label>Hap1</label>
    </interactant>
    <organismsDiffer>false</organismsDiffer>
    <experiments>3</experiments>
</comment>
<comment type="interaction">
    <interactant intactId="EBI-26961214">
        <id>P97924-5</id>
    </interactant>
    <interactant intactId="EBI-7281118">
        <id>Q62765</id>
        <label>Nlgn1</label>
    </interactant>
    <organismsDiffer>false</organismsDiffer>
    <experiments>5</experiments>
</comment>
<comment type="interaction">
    <interactant intactId="EBI-26961214">
        <id>P97924-5</id>
    </interactant>
    <interactant intactId="EBI-775037">
        <id>Q99K10</id>
        <label>Nlgn1</label>
    </interactant>
    <organismsDiffer>true</organismsDiffer>
    <experiments>2</experiments>
</comment>
<comment type="subcellular location">
    <subcellularLocation>
        <location>Cytoplasm</location>
    </subcellularLocation>
    <subcellularLocation>
        <location>Cytoplasm</location>
        <location>Cytoskeleton</location>
    </subcellularLocation>
    <text>Isoform 6 is largely associated with synaptosomal membranes and to punctate structures in cortical neurons. Isoforms 1 and 7 are expressed in neuronal cell bodies, isoform 7 is also found in neuronal processes.</text>
</comment>
<comment type="alternative products">
    <event type="alternative splicing"/>
    <event type="alternative initiation"/>
    <isoform>
        <id>P97924-1</id>
        <name>1</name>
        <name>Kalirin-12A</name>
        <sequence type="displayed"/>
    </isoform>
    <isoform>
        <id>P97924-2</id>
        <name>2</name>
        <name>Kalirin-8B</name>
        <name>P-CIP10B</name>
        <sequence type="described" ref="VSP_028891 VSP_028899 VSP_028900"/>
    </isoform>
    <isoform>
        <id>P97924-3</id>
        <name>3</name>
        <name>Kalirin-8A</name>
        <name>P-CIP10A</name>
        <sequence type="described" ref="VSP_028899 VSP_028900"/>
    </isoform>
    <isoform>
        <id>P97924-4</id>
        <name>4</name>
        <sequence type="described" ref="VSP_028896"/>
    </isoform>
    <isoform>
        <id>P97924-5</id>
        <name>5</name>
        <name>Delta Kalirin-7</name>
        <sequence type="described" ref="VSP_028893 VSP_028897 VSP_028898"/>
    </isoform>
    <isoform>
        <id>P97924-6</id>
        <name>6</name>
        <name>Kalirin-7</name>
        <name>Kalirin-7c</name>
        <name>HAPIP</name>
        <sequence type="described" ref="VSP_028892 VSP_028897 VSP_028898"/>
    </isoform>
    <isoform>
        <id>P97924-7</id>
        <name>7</name>
        <name>Kalirin-9A</name>
        <sequence type="described" ref="VSP_028901 VSP_028902"/>
    </isoform>
    <isoform>
        <id>P97924-8</id>
        <name>8</name>
        <name>Kalirin-4a</name>
        <sequence type="described" ref="VSP_028894 VSP_028895"/>
    </isoform>
</comment>
<comment type="tissue specificity">
    <text evidence="14 15">Highly expressed in the brain and nervous system. Isoform 6 is highly enriched in the postsynaptic density fraction of the cerebral cortex.</text>
</comment>
<comment type="developmental stage">
    <text evidence="16">Isoforms 1 and 7 are prevelant 2 dpp, isoform 6 is not detectable until 2 weeks after birth.</text>
</comment>
<comment type="domain">
    <text evidence="16 18">The two GEF domains catalyze nucleotide exchange for RAC1 and RhoA which are bound by DH1 and DH2 respectively. The two GEF domains appear to play differing roles in neuronal development and axonal outgrowth. SH3 1 binds to the first GEF domain inhibiting GEF activity only when in the presence of a PXXP peptide, suggesting that the SH3 domain/peptide interaction mediates binding to GEF1. CRK1 SH3 domain binds to and inhibits GEF1 activity.</text>
</comment>
<comment type="PTM">
    <text evidence="1">Autophosphorylated.</text>
</comment>
<comment type="miscellaneous">
    <text>Called DUO because the encoded protein is closely related to but shorter than TRIO.</text>
</comment>
<comment type="miscellaneous">
    <molecule>Isoform 1</molecule>
    <text>Produced by alternative splicing.</text>
</comment>
<comment type="miscellaneous">
    <molecule>Isoform 2</molecule>
    <text evidence="25">Produced by alternative splicing.</text>
</comment>
<comment type="miscellaneous">
    <molecule>Isoform 3</molecule>
    <text evidence="25">Produced by alternative splicing.</text>
</comment>
<comment type="miscellaneous">
    <molecule>Isoform 4</molecule>
    <text evidence="25">Produced by alternative splicing.</text>
</comment>
<comment type="miscellaneous">
    <molecule>Isoform 5</molecule>
    <text evidence="25">Produced by alternative initiation at Met-624 of isoform 6.</text>
</comment>
<comment type="miscellaneous">
    <molecule>Isoform 6</molecule>
    <text evidence="25">Produced by alternative splicing.</text>
</comment>
<comment type="miscellaneous">
    <molecule>Isoform 7</molecule>
    <text evidence="25">Produced by alternative splicing.</text>
</comment>
<comment type="miscellaneous">
    <molecule>Isoform 8</molecule>
    <text evidence="25">Produced by alternative splicing.</text>
</comment>
<comment type="similarity">
    <text evidence="25">Belongs to the protein kinase superfamily. CAMK Ser/Thr protein kinase family.</text>
</comment>
<feature type="chain" id="PRO_0000080956" description="Kalirin">
    <location>
        <begin position="1"/>
        <end position="2959"/>
    </location>
</feature>
<feature type="domain" description="CRAL-TRIO" evidence="5">
    <location>
        <begin position="17"/>
        <end position="162"/>
    </location>
</feature>
<feature type="repeat" description="Spectrin 1" evidence="4">
    <location>
        <begin position="149"/>
        <end position="290"/>
    </location>
</feature>
<feature type="repeat" description="Spectrin 2" evidence="4">
    <location>
        <begin position="292"/>
        <end position="399"/>
    </location>
</feature>
<feature type="repeat" description="Spectrin 3" evidence="4">
    <location>
        <begin position="400"/>
        <end position="517"/>
    </location>
</feature>
<feature type="repeat" description="Spectrin 4" evidence="4">
    <location>
        <begin position="518"/>
        <end position="621"/>
    </location>
</feature>
<feature type="repeat" description="Spectrin 5" evidence="4">
    <location>
        <begin position="622"/>
        <end position="752"/>
    </location>
</feature>
<feature type="repeat" description="Spectrin 6" evidence="4">
    <location>
        <begin position="753"/>
        <end position="870"/>
    </location>
</feature>
<feature type="repeat" description="Spectrin 7" evidence="4">
    <location>
        <begin position="871"/>
        <end position="977"/>
    </location>
</feature>
<feature type="repeat" description="Spectrin 8" evidence="4">
    <location>
        <begin position="978"/>
        <end position="1101"/>
    </location>
</feature>
<feature type="repeat" description="Spectrin 9" evidence="4">
    <location>
        <begin position="1102"/>
        <end position="1207"/>
    </location>
</feature>
<feature type="domain" description="DH 1" evidence="6">
    <location>
        <begin position="1254"/>
        <end position="1429"/>
    </location>
</feature>
<feature type="domain" description="PH 1" evidence="8">
    <location>
        <begin position="1441"/>
        <end position="1553"/>
    </location>
</feature>
<feature type="domain" description="SH3 1" evidence="10">
    <location>
        <begin position="1619"/>
        <end position="1684"/>
    </location>
</feature>
<feature type="domain" description="DH 2" evidence="6">
    <location>
        <begin position="1901"/>
        <end position="2076"/>
    </location>
</feature>
<feature type="domain" description="PH 2" evidence="8">
    <location>
        <begin position="2088"/>
        <end position="2198"/>
    </location>
</feature>
<feature type="domain" description="SH3 2" evidence="10">
    <location>
        <begin position="2293"/>
        <end position="2358"/>
    </location>
</feature>
<feature type="domain" description="Ig-like C2-type">
    <location>
        <begin position="2444"/>
        <end position="2537"/>
    </location>
</feature>
<feature type="domain" description="Fibronectin type-III" evidence="11">
    <location>
        <begin position="2544"/>
        <end position="2638"/>
    </location>
</feature>
<feature type="domain" description="Protein kinase" evidence="9">
    <location>
        <begin position="2657"/>
        <end position="2911"/>
    </location>
</feature>
<feature type="region of interest" description="Disordered" evidence="13">
    <location>
        <begin position="692"/>
        <end position="719"/>
    </location>
</feature>
<feature type="region of interest" description="Disordered" evidence="13">
    <location>
        <begin position="1568"/>
        <end position="1615"/>
    </location>
</feature>
<feature type="region of interest" description="Disordered" evidence="13">
    <location>
        <begin position="1703"/>
        <end position="1828"/>
    </location>
</feature>
<feature type="region of interest" description="Disordered" evidence="13">
    <location>
        <begin position="2216"/>
        <end position="2280"/>
    </location>
</feature>
<feature type="region of interest" description="Disordered" evidence="13">
    <location>
        <begin position="2385"/>
        <end position="2427"/>
    </location>
</feature>
<feature type="compositionally biased region" description="Polar residues" evidence="13">
    <location>
        <begin position="707"/>
        <end position="719"/>
    </location>
</feature>
<feature type="compositionally biased region" description="Polar residues" evidence="13">
    <location>
        <begin position="1592"/>
        <end position="1612"/>
    </location>
</feature>
<feature type="compositionally biased region" description="Polar residues" evidence="13">
    <location>
        <begin position="1714"/>
        <end position="1740"/>
    </location>
</feature>
<feature type="compositionally biased region" description="Basic and acidic residues" evidence="13">
    <location>
        <begin position="1791"/>
        <end position="1800"/>
    </location>
</feature>
<feature type="compositionally biased region" description="Acidic residues" evidence="13">
    <location>
        <begin position="2416"/>
        <end position="2426"/>
    </location>
</feature>
<feature type="active site" description="Proton acceptor" evidence="9 12">
    <location>
        <position position="2776"/>
    </location>
</feature>
<feature type="binding site" evidence="9">
    <location>
        <begin position="2663"/>
        <end position="2671"/>
    </location>
    <ligand>
        <name>ATP</name>
        <dbReference type="ChEBI" id="CHEBI:30616"/>
    </ligand>
</feature>
<feature type="binding site" evidence="9">
    <location>
        <position position="2686"/>
    </location>
    <ligand>
        <name>ATP</name>
        <dbReference type="ChEBI" id="CHEBI:30616"/>
    </ligand>
</feature>
<feature type="modified residue" description="Phosphoserine" evidence="3">
    <location>
        <position position="1723"/>
    </location>
</feature>
<feature type="modified residue" description="Phosphoserine" evidence="3">
    <location>
        <position position="1726"/>
    </location>
</feature>
<feature type="modified residue" description="Phosphoserine" evidence="27">
    <location>
        <position position="1772"/>
    </location>
</feature>
<feature type="modified residue" description="Phosphothreonine" evidence="27">
    <location>
        <position position="1785"/>
    </location>
</feature>
<feature type="modified residue" description="Phosphoserine" evidence="27">
    <location>
        <position position="1790"/>
    </location>
</feature>
<feature type="modified residue" description="Phosphothreonine" evidence="2">
    <location>
        <position position="1885"/>
    </location>
</feature>
<feature type="modified residue" description="Phosphoserine" evidence="3">
    <location>
        <position position="2234"/>
    </location>
</feature>
<feature type="disulfide bond" evidence="7">
    <location>
        <begin position="2465"/>
        <end position="2521"/>
    </location>
</feature>
<feature type="splice variant" id="VSP_028893" description="In isoform 5." evidence="20">
    <location>
        <begin position="1"/>
        <end position="623"/>
    </location>
</feature>
<feature type="splice variant" id="VSP_028891" description="In isoform 2." evidence="22 23">
    <original>MVLS</original>
    <variation>MNPPEGASEEGGAADSDVDAFFRT</variation>
    <location>
        <begin position="1"/>
        <end position="4"/>
    </location>
</feature>
<feature type="splice variant" id="VSP_028892" description="In isoform 6." evidence="19">
    <original>MVLS</original>
    <variation>MTDRFWDQWYLWYLRLLRLLDR</variation>
    <location>
        <begin position="1"/>
        <end position="4"/>
    </location>
</feature>
<feature type="splice variant" id="VSP_028894" description="In isoform 8." evidence="21">
    <original>DSAVSNNKTPHSSS</original>
    <variation>SAWAVIPVGNASG</variation>
    <location>
        <begin position="705"/>
        <end position="718"/>
    </location>
</feature>
<feature type="splice variant" id="VSP_028895" description="In isoform 8." evidence="21">
    <location>
        <begin position="719"/>
        <end position="2959"/>
    </location>
</feature>
<feature type="splice variant" id="VSP_028896" description="In isoform 4." evidence="24">
    <original>E</original>
    <variation>ESLFHATSLQ</variation>
    <location>
        <position position="923"/>
    </location>
</feature>
<feature type="splice variant" id="VSP_028897" description="In isoform 5 and isoform 6." evidence="19 20">
    <original>LSGGCELTVVLQDFSAAHSS</original>
    <variation>DGNLVPRWHLGPGDPFSTYV</variation>
    <location>
        <begin position="1617"/>
        <end position="1636"/>
    </location>
</feature>
<feature type="splice variant" id="VSP_028898" description="In isoform 5 and isoform 6." evidence="19 20">
    <location>
        <begin position="1637"/>
        <end position="2959"/>
    </location>
</feature>
<feature type="splice variant" id="VSP_028899" description="In isoform 2 and isoform 3." evidence="22 23">
    <original>TLEGGSYRGSLKDPTVCLNEGMAPPTPPRNLEEEQKAKAL</original>
    <variation>VSGHAGGSRVLPLTSMWLPGPQLGPQISYLHPDFVYSNCI</variation>
    <location>
        <begin position="1860"/>
        <end position="1899"/>
    </location>
</feature>
<feature type="splice variant" id="VSP_028900" description="In isoform 2 and isoform 3." evidence="22 23">
    <location>
        <begin position="1900"/>
        <end position="2959"/>
    </location>
</feature>
<feature type="splice variant" id="VSP_028901" description="In isoform 7." evidence="20">
    <original>KSCSW</original>
    <variation>TLLKP</variation>
    <location>
        <begin position="2372"/>
        <end position="2376"/>
    </location>
</feature>
<feature type="splice variant" id="VSP_028902" description="In isoform 7." evidence="20">
    <location>
        <begin position="2377"/>
        <end position="2959"/>
    </location>
</feature>
<feature type="sequence conflict" description="In Ref. 5; AAT39517." evidence="25" ref="5">
    <original>T</original>
    <variation>S</variation>
    <location>
        <position position="46"/>
    </location>
</feature>
<feature type="sequence conflict" description="In Ref. 5; AAT39517." evidence="25" ref="5">
    <original>N</original>
    <variation>Y</variation>
    <location>
        <position position="62"/>
    </location>
</feature>
<feature type="helix" evidence="29">
    <location>
        <begin position="1254"/>
        <end position="1278"/>
    </location>
</feature>
<feature type="helix" evidence="29">
    <location>
        <begin position="1280"/>
        <end position="1286"/>
    </location>
</feature>
<feature type="strand" evidence="29">
    <location>
        <begin position="1287"/>
        <end position="1289"/>
    </location>
</feature>
<feature type="turn" evidence="29">
    <location>
        <begin position="1293"/>
        <end position="1297"/>
    </location>
</feature>
<feature type="helix" evidence="29">
    <location>
        <begin position="1299"/>
        <end position="1303"/>
    </location>
</feature>
<feature type="helix" evidence="29">
    <location>
        <begin position="1306"/>
        <end position="1315"/>
    </location>
</feature>
<feature type="helix" evidence="29">
    <location>
        <begin position="1317"/>
        <end position="1323"/>
    </location>
</feature>
<feature type="turn" evidence="29">
    <location>
        <begin position="1324"/>
        <end position="1326"/>
    </location>
</feature>
<feature type="helix" evidence="29">
    <location>
        <begin position="1328"/>
        <end position="1331"/>
    </location>
</feature>
<feature type="helix" evidence="29">
    <location>
        <begin position="1332"/>
        <end position="1337"/>
    </location>
</feature>
<feature type="helix" evidence="29">
    <location>
        <begin position="1339"/>
        <end position="1343"/>
    </location>
</feature>
<feature type="helix" evidence="29">
    <location>
        <begin position="1344"/>
        <end position="1362"/>
    </location>
</feature>
<feature type="helix" evidence="29">
    <location>
        <begin position="1366"/>
        <end position="1374"/>
    </location>
</feature>
<feature type="helix" evidence="29">
    <location>
        <begin position="1380"/>
        <end position="1384"/>
    </location>
</feature>
<feature type="helix" evidence="29">
    <location>
        <begin position="1386"/>
        <end position="1391"/>
    </location>
</feature>
<feature type="helix" evidence="29">
    <location>
        <begin position="1394"/>
        <end position="1402"/>
    </location>
</feature>
<feature type="helix" evidence="29">
    <location>
        <begin position="1409"/>
        <end position="1428"/>
    </location>
</feature>
<feature type="strand" evidence="28">
    <location>
        <begin position="1622"/>
        <end position="1625"/>
    </location>
</feature>
<feature type="strand" evidence="28">
    <location>
        <begin position="1645"/>
        <end position="1650"/>
    </location>
</feature>
<feature type="strand" evidence="28">
    <location>
        <begin position="1658"/>
        <end position="1668"/>
    </location>
</feature>
<feature type="strand" evidence="28">
    <location>
        <begin position="1670"/>
        <end position="1675"/>
    </location>
</feature>
<feature type="helix" evidence="28">
    <location>
        <begin position="1676"/>
        <end position="1678"/>
    </location>
</feature>
<evidence type="ECO:0000250" key="1"/>
<evidence type="ECO:0000250" key="2">
    <source>
        <dbReference type="UniProtKB" id="A2CG49"/>
    </source>
</evidence>
<evidence type="ECO:0000250" key="3">
    <source>
        <dbReference type="UniProtKB" id="O60229"/>
    </source>
</evidence>
<evidence type="ECO:0000255" key="4"/>
<evidence type="ECO:0000255" key="5">
    <source>
        <dbReference type="PROSITE-ProRule" id="PRU00056"/>
    </source>
</evidence>
<evidence type="ECO:0000255" key="6">
    <source>
        <dbReference type="PROSITE-ProRule" id="PRU00062"/>
    </source>
</evidence>
<evidence type="ECO:0000255" key="7">
    <source>
        <dbReference type="PROSITE-ProRule" id="PRU00114"/>
    </source>
</evidence>
<evidence type="ECO:0000255" key="8">
    <source>
        <dbReference type="PROSITE-ProRule" id="PRU00145"/>
    </source>
</evidence>
<evidence type="ECO:0000255" key="9">
    <source>
        <dbReference type="PROSITE-ProRule" id="PRU00159"/>
    </source>
</evidence>
<evidence type="ECO:0000255" key="10">
    <source>
        <dbReference type="PROSITE-ProRule" id="PRU00192"/>
    </source>
</evidence>
<evidence type="ECO:0000255" key="11">
    <source>
        <dbReference type="PROSITE-ProRule" id="PRU00316"/>
    </source>
</evidence>
<evidence type="ECO:0000255" key="12">
    <source>
        <dbReference type="PROSITE-ProRule" id="PRU10027"/>
    </source>
</evidence>
<evidence type="ECO:0000256" key="13">
    <source>
        <dbReference type="SAM" id="MobiDB-lite"/>
    </source>
</evidence>
<evidence type="ECO:0000269" key="14">
    <source>
    </source>
</evidence>
<evidence type="ECO:0000269" key="15">
    <source>
    </source>
</evidence>
<evidence type="ECO:0000269" key="16">
    <source>
    </source>
</evidence>
<evidence type="ECO:0000269" key="17">
    <source>
    </source>
</evidence>
<evidence type="ECO:0000269" key="18">
    <source>
    </source>
</evidence>
<evidence type="ECO:0000303" key="19">
    <source>
    </source>
</evidence>
<evidence type="ECO:0000303" key="20">
    <source>
    </source>
</evidence>
<evidence type="ECO:0000303" key="21">
    <source>
    </source>
</evidence>
<evidence type="ECO:0000303" key="22">
    <source>
    </source>
</evidence>
<evidence type="ECO:0000303" key="23">
    <source>
    </source>
</evidence>
<evidence type="ECO:0000303" key="24">
    <source>
    </source>
</evidence>
<evidence type="ECO:0000305" key="25"/>
<evidence type="ECO:0000312" key="26">
    <source>
        <dbReference type="RGD" id="621865"/>
    </source>
</evidence>
<evidence type="ECO:0007744" key="27">
    <source>
    </source>
</evidence>
<evidence type="ECO:0007829" key="28">
    <source>
        <dbReference type="PDB" id="1U3O"/>
    </source>
</evidence>
<evidence type="ECO:0007829" key="29">
    <source>
        <dbReference type="PDB" id="5O33"/>
    </source>
</evidence>
<organism>
    <name type="scientific">Rattus norvegicus</name>
    <name type="common">Rat</name>
    <dbReference type="NCBI Taxonomy" id="10116"/>
    <lineage>
        <taxon>Eukaryota</taxon>
        <taxon>Metazoa</taxon>
        <taxon>Chordata</taxon>
        <taxon>Craniata</taxon>
        <taxon>Vertebrata</taxon>
        <taxon>Euteleostomi</taxon>
        <taxon>Mammalia</taxon>
        <taxon>Eutheria</taxon>
        <taxon>Euarchontoglires</taxon>
        <taxon>Glires</taxon>
        <taxon>Rodentia</taxon>
        <taxon>Myomorpha</taxon>
        <taxon>Muroidea</taxon>
        <taxon>Muridae</taxon>
        <taxon>Murinae</taxon>
        <taxon>Rattus</taxon>
    </lineage>
</organism>
<dbReference type="EC" id="2.7.11.1"/>
<dbReference type="EMBL" id="U88156">
    <property type="protein sequence ID" value="AAB66366.1"/>
    <property type="molecule type" value="mRNA"/>
</dbReference>
<dbReference type="EMBL" id="U88157">
    <property type="protein sequence ID" value="AAB66367.1"/>
    <property type="molecule type" value="mRNA"/>
</dbReference>
<dbReference type="EMBL" id="AF230644">
    <property type="protein sequence ID" value="AAF69144.1"/>
    <property type="molecule type" value="mRNA"/>
</dbReference>
<dbReference type="EMBL" id="AF229255">
    <property type="protein sequence ID" value="AAF66014.1"/>
    <property type="molecule type" value="mRNA"/>
</dbReference>
<dbReference type="EMBL" id="AF232668">
    <property type="protein sequence ID" value="AAF66018.1"/>
    <property type="molecule type" value="mRNA"/>
</dbReference>
<dbReference type="EMBL" id="AF232669">
    <property type="protein sequence ID" value="AAF66019.1"/>
    <property type="molecule type" value="mRNA"/>
</dbReference>
<dbReference type="EMBL" id="AY621095">
    <property type="protein sequence ID" value="AAT39517.1"/>
    <property type="molecule type" value="mRNA"/>
</dbReference>
<dbReference type="EMBL" id="U94189">
    <property type="protein sequence ID" value="AAC15790.1"/>
    <property type="molecule type" value="mRNA"/>
</dbReference>
<dbReference type="PIR" id="T32732">
    <property type="entry name" value="T32732"/>
</dbReference>
<dbReference type="PIR" id="T42098">
    <property type="entry name" value="T42098"/>
</dbReference>
<dbReference type="RefSeq" id="NP_114451.2">
    <property type="nucleotide sequence ID" value="NM_032062.2"/>
</dbReference>
<dbReference type="PDB" id="1U3O">
    <property type="method" value="NMR"/>
    <property type="chains" value="A=1617-1686"/>
</dbReference>
<dbReference type="PDB" id="2KR9">
    <property type="method" value="NMR"/>
    <property type="chains" value="A=1253-1432"/>
</dbReference>
<dbReference type="PDB" id="5O33">
    <property type="method" value="X-ray"/>
    <property type="resolution" value="1.64 A"/>
    <property type="chains" value="B=1253-1432"/>
</dbReference>
<dbReference type="PDBsum" id="1U3O"/>
<dbReference type="PDBsum" id="2KR9"/>
<dbReference type="PDBsum" id="5O33"/>
<dbReference type="SMR" id="P97924"/>
<dbReference type="BioGRID" id="249875">
    <property type="interactions" value="7"/>
</dbReference>
<dbReference type="CORUM" id="P97924"/>
<dbReference type="FunCoup" id="P97924">
    <property type="interactions" value="1713"/>
</dbReference>
<dbReference type="IntAct" id="P97924">
    <property type="interactions" value="17"/>
</dbReference>
<dbReference type="MINT" id="P97924"/>
<dbReference type="STRING" id="10116.ENSRNOP00000039072"/>
<dbReference type="ChEMBL" id="CHEMBL2176786"/>
<dbReference type="GlyGen" id="P97924">
    <property type="glycosylation" value="1 site"/>
</dbReference>
<dbReference type="iPTMnet" id="P97924"/>
<dbReference type="PhosphoSitePlus" id="P97924"/>
<dbReference type="PaxDb" id="10116-ENSRNOP00000039072"/>
<dbReference type="DNASU" id="84009"/>
<dbReference type="GeneID" id="84009"/>
<dbReference type="KEGG" id="rno:84009"/>
<dbReference type="UCSC" id="RGD:621865">
    <molecule id="P97924-1"/>
    <property type="organism name" value="rat"/>
</dbReference>
<dbReference type="AGR" id="RGD:621865"/>
<dbReference type="CTD" id="8997"/>
<dbReference type="RGD" id="621865">
    <property type="gene designation" value="Kalrn"/>
</dbReference>
<dbReference type="VEuPathDB" id="HostDB:ENSRNOG00000001706"/>
<dbReference type="eggNOG" id="KOG0032">
    <property type="taxonomic scope" value="Eukaryota"/>
</dbReference>
<dbReference type="eggNOG" id="KOG0613">
    <property type="taxonomic scope" value="Eukaryota"/>
</dbReference>
<dbReference type="eggNOG" id="KOG4240">
    <property type="taxonomic scope" value="Eukaryota"/>
</dbReference>
<dbReference type="InParanoid" id="P97924"/>
<dbReference type="PhylomeDB" id="P97924"/>
<dbReference type="Reactome" id="R-RNO-193648">
    <property type="pathway name" value="NRAGE signals death through JNK"/>
</dbReference>
<dbReference type="Reactome" id="R-RNO-3928662">
    <property type="pathway name" value="EPHB-mediated forward signaling"/>
</dbReference>
<dbReference type="Reactome" id="R-RNO-416476">
    <property type="pathway name" value="G alpha (q) signalling events"/>
</dbReference>
<dbReference type="Reactome" id="R-RNO-416482">
    <property type="pathway name" value="G alpha (12/13) signalling events"/>
</dbReference>
<dbReference type="Reactome" id="R-RNO-5687128">
    <property type="pathway name" value="MAPK6/MAPK4 signaling"/>
</dbReference>
<dbReference type="Reactome" id="R-RNO-8980692">
    <property type="pathway name" value="RHOA GTPase cycle"/>
</dbReference>
<dbReference type="Reactome" id="R-RNO-9013149">
    <property type="pathway name" value="RAC1 GTPase cycle"/>
</dbReference>
<dbReference type="Reactome" id="R-RNO-9013408">
    <property type="pathway name" value="RHOG GTPase cycle"/>
</dbReference>
<dbReference type="EvolutionaryTrace" id="P97924"/>
<dbReference type="PRO" id="PR:P97924"/>
<dbReference type="Proteomes" id="UP000002494">
    <property type="component" value="Chromosome 11"/>
</dbReference>
<dbReference type="Bgee" id="ENSRNOG00000001706">
    <property type="expression patterns" value="Expressed in frontal cortex and 20 other cell types or tissues"/>
</dbReference>
<dbReference type="ExpressionAtlas" id="P97924">
    <property type="expression patterns" value="baseline and differential"/>
</dbReference>
<dbReference type="GO" id="GO:0005737">
    <property type="term" value="C:cytoplasm"/>
    <property type="evidence" value="ECO:0000318"/>
    <property type="project" value="GO_Central"/>
</dbReference>
<dbReference type="GO" id="GO:0005856">
    <property type="term" value="C:cytoskeleton"/>
    <property type="evidence" value="ECO:0007669"/>
    <property type="project" value="UniProtKB-SubCell"/>
</dbReference>
<dbReference type="GO" id="GO:0019898">
    <property type="term" value="C:extrinsic component of membrane"/>
    <property type="evidence" value="ECO:0000318"/>
    <property type="project" value="GO_Central"/>
</dbReference>
<dbReference type="GO" id="GO:0098978">
    <property type="term" value="C:glutamatergic synapse"/>
    <property type="evidence" value="ECO:0000314"/>
    <property type="project" value="SynGO"/>
</dbReference>
<dbReference type="GO" id="GO:0043025">
    <property type="term" value="C:neuronal cell body"/>
    <property type="evidence" value="ECO:0000314"/>
    <property type="project" value="RGD"/>
</dbReference>
<dbReference type="GO" id="GO:0048471">
    <property type="term" value="C:perinuclear region of cytoplasm"/>
    <property type="evidence" value="ECO:0000314"/>
    <property type="project" value="RGD"/>
</dbReference>
<dbReference type="GO" id="GO:0014069">
    <property type="term" value="C:postsynaptic density"/>
    <property type="evidence" value="ECO:0000314"/>
    <property type="project" value="SynGO"/>
</dbReference>
<dbReference type="GO" id="GO:0098793">
    <property type="term" value="C:presynapse"/>
    <property type="evidence" value="ECO:0000314"/>
    <property type="project" value="SynGO"/>
</dbReference>
<dbReference type="GO" id="GO:0005524">
    <property type="term" value="F:ATP binding"/>
    <property type="evidence" value="ECO:0007669"/>
    <property type="project" value="UniProtKB-KW"/>
</dbReference>
<dbReference type="GO" id="GO:0019899">
    <property type="term" value="F:enzyme binding"/>
    <property type="evidence" value="ECO:0000353"/>
    <property type="project" value="RGD"/>
</dbReference>
<dbReference type="GO" id="GO:0005085">
    <property type="term" value="F:guanyl-nucleotide exchange factor activity"/>
    <property type="evidence" value="ECO:0000266"/>
    <property type="project" value="RGD"/>
</dbReference>
<dbReference type="GO" id="GO:0046872">
    <property type="term" value="F:metal ion binding"/>
    <property type="evidence" value="ECO:0007669"/>
    <property type="project" value="UniProtKB-KW"/>
</dbReference>
<dbReference type="GO" id="GO:0106310">
    <property type="term" value="F:protein serine kinase activity"/>
    <property type="evidence" value="ECO:0007669"/>
    <property type="project" value="RHEA"/>
</dbReference>
<dbReference type="GO" id="GO:0004674">
    <property type="term" value="F:protein serine/threonine kinase activity"/>
    <property type="evidence" value="ECO:0007669"/>
    <property type="project" value="UniProtKB-KW"/>
</dbReference>
<dbReference type="GO" id="GO:0008344">
    <property type="term" value="P:adult locomotory behavior"/>
    <property type="evidence" value="ECO:0000266"/>
    <property type="project" value="RGD"/>
</dbReference>
<dbReference type="GO" id="GO:0007411">
    <property type="term" value="P:axon guidance"/>
    <property type="evidence" value="ECO:0000318"/>
    <property type="project" value="GO_Central"/>
</dbReference>
<dbReference type="GO" id="GO:0007409">
    <property type="term" value="P:axonogenesis"/>
    <property type="evidence" value="ECO:0000314"/>
    <property type="project" value="RGD"/>
</dbReference>
<dbReference type="GO" id="GO:0046959">
    <property type="term" value="P:habituation"/>
    <property type="evidence" value="ECO:0000266"/>
    <property type="project" value="RGD"/>
</dbReference>
<dbReference type="GO" id="GO:0035556">
    <property type="term" value="P:intracellular signal transduction"/>
    <property type="evidence" value="ECO:0000314"/>
    <property type="project" value="HGNC-UCL"/>
</dbReference>
<dbReference type="GO" id="GO:0007595">
    <property type="term" value="P:lactation"/>
    <property type="evidence" value="ECO:0000266"/>
    <property type="project" value="RGD"/>
</dbReference>
<dbReference type="GO" id="GO:0042711">
    <property type="term" value="P:maternal behavior"/>
    <property type="evidence" value="ECO:0000266"/>
    <property type="project" value="RGD"/>
</dbReference>
<dbReference type="GO" id="GO:0060137">
    <property type="term" value="P:maternal process involved in parturition"/>
    <property type="evidence" value="ECO:0000266"/>
    <property type="project" value="RGD"/>
</dbReference>
<dbReference type="GO" id="GO:0007613">
    <property type="term" value="P:memory"/>
    <property type="evidence" value="ECO:0000266"/>
    <property type="project" value="RGD"/>
</dbReference>
<dbReference type="GO" id="GO:0060125">
    <property type="term" value="P:negative regulation of growth hormone secretion"/>
    <property type="evidence" value="ECO:0000266"/>
    <property type="project" value="RGD"/>
</dbReference>
<dbReference type="GO" id="GO:0007399">
    <property type="term" value="P:nervous system development"/>
    <property type="evidence" value="ECO:0000314"/>
    <property type="project" value="HGNC-UCL"/>
</dbReference>
<dbReference type="GO" id="GO:0007528">
    <property type="term" value="P:neuromuscular junction development"/>
    <property type="evidence" value="ECO:0000266"/>
    <property type="project" value="RGD"/>
</dbReference>
<dbReference type="GO" id="GO:0061003">
    <property type="term" value="P:positive regulation of dendritic spine morphogenesis"/>
    <property type="evidence" value="ECO:0000266"/>
    <property type="project" value="RGD"/>
</dbReference>
<dbReference type="GO" id="GO:0050773">
    <property type="term" value="P:regulation of dendrite development"/>
    <property type="evidence" value="ECO:0000314"/>
    <property type="project" value="RGD"/>
</dbReference>
<dbReference type="GO" id="GO:1905274">
    <property type="term" value="P:regulation of modification of postsynaptic actin cytoskeleton"/>
    <property type="evidence" value="ECO:0000314"/>
    <property type="project" value="SynGO"/>
</dbReference>
<dbReference type="GO" id="GO:0098696">
    <property type="term" value="P:regulation of neurotransmitter receptor localization to postsynaptic specialization membrane"/>
    <property type="evidence" value="ECO:0000314"/>
    <property type="project" value="SynGO"/>
</dbReference>
<dbReference type="GO" id="GO:0035176">
    <property type="term" value="P:social behavior"/>
    <property type="evidence" value="ECO:0000266"/>
    <property type="project" value="RGD"/>
</dbReference>
<dbReference type="CDD" id="cd00063">
    <property type="entry name" value="FN3"/>
    <property type="match status" value="1"/>
</dbReference>
<dbReference type="CDD" id="cd13240">
    <property type="entry name" value="PH1_Kalirin_Trio_like"/>
    <property type="match status" value="1"/>
</dbReference>
<dbReference type="CDD" id="cd13241">
    <property type="entry name" value="PH2_Kalirin_Trio_p63RhoGEF"/>
    <property type="match status" value="1"/>
</dbReference>
<dbReference type="CDD" id="cd00160">
    <property type="entry name" value="RhoGEF"/>
    <property type="match status" value="2"/>
</dbReference>
<dbReference type="CDD" id="cd00170">
    <property type="entry name" value="SEC14"/>
    <property type="match status" value="1"/>
</dbReference>
<dbReference type="CDD" id="cd11852">
    <property type="entry name" value="SH3_Kalirin_1"/>
    <property type="match status" value="1"/>
</dbReference>
<dbReference type="CDD" id="cd11853">
    <property type="entry name" value="SH3_Kalirin_2"/>
    <property type="match status" value="1"/>
</dbReference>
<dbReference type="CDD" id="cd00176">
    <property type="entry name" value="SPEC"/>
    <property type="match status" value="5"/>
</dbReference>
<dbReference type="CDD" id="cd14115">
    <property type="entry name" value="STKc_Kalirin_C"/>
    <property type="match status" value="1"/>
</dbReference>
<dbReference type="FunFam" id="1.20.900.10:FF:000001">
    <property type="entry name" value="Guanine nucleotide exchange factor DBS"/>
    <property type="match status" value="1"/>
</dbReference>
<dbReference type="FunFam" id="1.10.510.10:FF:000152">
    <property type="entry name" value="kalirin isoform X1"/>
    <property type="match status" value="1"/>
</dbReference>
<dbReference type="FunFam" id="2.30.29.30:FF:000091">
    <property type="entry name" value="kalirin isoform X1"/>
    <property type="match status" value="1"/>
</dbReference>
<dbReference type="FunFam" id="2.30.30.40:FF:000038">
    <property type="entry name" value="kalirin isoform X1"/>
    <property type="match status" value="1"/>
</dbReference>
<dbReference type="FunFam" id="2.30.30.40:FF:000040">
    <property type="entry name" value="kalirin isoform X1"/>
    <property type="match status" value="1"/>
</dbReference>
<dbReference type="FunFam" id="2.60.40.10:FF:000325">
    <property type="entry name" value="kalirin isoform X1"/>
    <property type="match status" value="1"/>
</dbReference>
<dbReference type="FunFam" id="2.60.40.10:FF:000368">
    <property type="entry name" value="kalirin isoform X1"/>
    <property type="match status" value="1"/>
</dbReference>
<dbReference type="FunFam" id="3.30.200.20:FF:000169">
    <property type="entry name" value="kalirin isoform X1"/>
    <property type="match status" value="1"/>
</dbReference>
<dbReference type="FunFam" id="1.20.58.60:FF:000034">
    <property type="entry name" value="kalirin isoform X2"/>
    <property type="match status" value="1"/>
</dbReference>
<dbReference type="FunFam" id="3.40.525.10:FF:000003">
    <property type="entry name" value="kalirin isoform X2"/>
    <property type="match status" value="1"/>
</dbReference>
<dbReference type="FunFam" id="1.20.58.60:FF:000024">
    <property type="entry name" value="Kalirin RhoGEF kinase a"/>
    <property type="match status" value="1"/>
</dbReference>
<dbReference type="FunFam" id="1.20.58.60:FF:000023">
    <property type="entry name" value="Kalirin RhoGEF kinase b"/>
    <property type="match status" value="1"/>
</dbReference>
<dbReference type="FunFam" id="1.20.58.60:FF:000032">
    <property type="entry name" value="Kalirin RhoGEF kinase b"/>
    <property type="match status" value="1"/>
</dbReference>
<dbReference type="FunFam" id="2.30.29.30:FF:000040">
    <property type="entry name" value="Kalirin RhoGEF kinase b"/>
    <property type="match status" value="1"/>
</dbReference>
<dbReference type="FunFam" id="1.20.900.10:FF:000008">
    <property type="entry name" value="rho guanine nucleotide exchange factor 25"/>
    <property type="match status" value="1"/>
</dbReference>
<dbReference type="FunFam" id="1.20.58.60:FF:000015">
    <property type="entry name" value="triple functional domain protein-like"/>
    <property type="match status" value="1"/>
</dbReference>
<dbReference type="Gene3D" id="1.20.58.60">
    <property type="match status" value="5"/>
</dbReference>
<dbReference type="Gene3D" id="3.40.525.10">
    <property type="entry name" value="CRAL-TRIO lipid binding domain"/>
    <property type="match status" value="1"/>
</dbReference>
<dbReference type="Gene3D" id="1.20.900.10">
    <property type="entry name" value="Dbl homology (DH) domain"/>
    <property type="match status" value="2"/>
</dbReference>
<dbReference type="Gene3D" id="2.60.40.10">
    <property type="entry name" value="Immunoglobulins"/>
    <property type="match status" value="2"/>
</dbReference>
<dbReference type="Gene3D" id="3.30.200.20">
    <property type="entry name" value="Phosphorylase Kinase, domain 1"/>
    <property type="match status" value="1"/>
</dbReference>
<dbReference type="Gene3D" id="2.30.29.30">
    <property type="entry name" value="Pleckstrin-homology domain (PH domain)/Phosphotyrosine-binding domain (PTB)"/>
    <property type="match status" value="2"/>
</dbReference>
<dbReference type="Gene3D" id="2.30.30.40">
    <property type="entry name" value="SH3 Domains"/>
    <property type="match status" value="2"/>
</dbReference>
<dbReference type="Gene3D" id="1.10.510.10">
    <property type="entry name" value="Transferase(Phosphotransferase) domain 1"/>
    <property type="match status" value="1"/>
</dbReference>
<dbReference type="InterPro" id="IPR001251">
    <property type="entry name" value="CRAL-TRIO_dom"/>
</dbReference>
<dbReference type="InterPro" id="IPR036865">
    <property type="entry name" value="CRAL-TRIO_dom_sf"/>
</dbReference>
<dbReference type="InterPro" id="IPR035899">
    <property type="entry name" value="DBL_dom_sf"/>
</dbReference>
<dbReference type="InterPro" id="IPR000219">
    <property type="entry name" value="DH_dom"/>
</dbReference>
<dbReference type="InterPro" id="IPR003961">
    <property type="entry name" value="FN3_dom"/>
</dbReference>
<dbReference type="InterPro" id="IPR036116">
    <property type="entry name" value="FN3_sf"/>
</dbReference>
<dbReference type="InterPro" id="IPR007110">
    <property type="entry name" value="Ig-like_dom"/>
</dbReference>
<dbReference type="InterPro" id="IPR036179">
    <property type="entry name" value="Ig-like_dom_sf"/>
</dbReference>
<dbReference type="InterPro" id="IPR013783">
    <property type="entry name" value="Ig-like_fold"/>
</dbReference>
<dbReference type="InterPro" id="IPR013098">
    <property type="entry name" value="Ig_I-set"/>
</dbReference>
<dbReference type="InterPro" id="IPR003599">
    <property type="entry name" value="Ig_sub"/>
</dbReference>
<dbReference type="InterPro" id="IPR003598">
    <property type="entry name" value="Ig_sub2"/>
</dbReference>
<dbReference type="InterPro" id="IPR047054">
    <property type="entry name" value="Kalirin_TRIO_PH_1"/>
</dbReference>
<dbReference type="InterPro" id="IPR028570">
    <property type="entry name" value="Kalirin_TRIO_SH3_1"/>
</dbReference>
<dbReference type="InterPro" id="IPR047053">
    <property type="entry name" value="Kalirin_TRIO_SH3_2"/>
</dbReference>
<dbReference type="InterPro" id="IPR011009">
    <property type="entry name" value="Kinase-like_dom_sf"/>
</dbReference>
<dbReference type="InterPro" id="IPR011993">
    <property type="entry name" value="PH-like_dom_sf"/>
</dbReference>
<dbReference type="InterPro" id="IPR001849">
    <property type="entry name" value="PH_domain"/>
</dbReference>
<dbReference type="InterPro" id="IPR000719">
    <property type="entry name" value="Prot_kinase_dom"/>
</dbReference>
<dbReference type="InterPro" id="IPR017441">
    <property type="entry name" value="Protein_kinase_ATP_BS"/>
</dbReference>
<dbReference type="InterPro" id="IPR051336">
    <property type="entry name" value="RhoGEF_Guanine_NuclExch_SF"/>
</dbReference>
<dbReference type="InterPro" id="IPR008271">
    <property type="entry name" value="Ser/Thr_kinase_AS"/>
</dbReference>
<dbReference type="InterPro" id="IPR036028">
    <property type="entry name" value="SH3-like_dom_sf"/>
</dbReference>
<dbReference type="InterPro" id="IPR001452">
    <property type="entry name" value="SH3_domain"/>
</dbReference>
<dbReference type="InterPro" id="IPR055251">
    <property type="entry name" value="SOS1_NGEF_PH"/>
</dbReference>
<dbReference type="InterPro" id="IPR018159">
    <property type="entry name" value="Spectrin/alpha-actinin"/>
</dbReference>
<dbReference type="InterPro" id="IPR002017">
    <property type="entry name" value="Spectrin_repeat"/>
</dbReference>
<dbReference type="PANTHER" id="PTHR22826:SF49">
    <property type="entry name" value="KALIRIN"/>
    <property type="match status" value="1"/>
</dbReference>
<dbReference type="PANTHER" id="PTHR22826">
    <property type="entry name" value="RHO GUANINE EXCHANGE FACTOR-RELATED"/>
    <property type="match status" value="1"/>
</dbReference>
<dbReference type="Pfam" id="PF13716">
    <property type="entry name" value="CRAL_TRIO_2"/>
    <property type="match status" value="1"/>
</dbReference>
<dbReference type="Pfam" id="PF00041">
    <property type="entry name" value="fn3"/>
    <property type="match status" value="1"/>
</dbReference>
<dbReference type="Pfam" id="PF07679">
    <property type="entry name" value="I-set"/>
    <property type="match status" value="1"/>
</dbReference>
<dbReference type="Pfam" id="PF00069">
    <property type="entry name" value="Pkinase"/>
    <property type="match status" value="1"/>
</dbReference>
<dbReference type="Pfam" id="PF00621">
    <property type="entry name" value="RhoGEF"/>
    <property type="match status" value="2"/>
</dbReference>
<dbReference type="Pfam" id="PF16609">
    <property type="entry name" value="SH3-RhoG_link"/>
    <property type="match status" value="1"/>
</dbReference>
<dbReference type="Pfam" id="PF00018">
    <property type="entry name" value="SH3_1"/>
    <property type="match status" value="1"/>
</dbReference>
<dbReference type="Pfam" id="PF23587">
    <property type="entry name" value="SH3_KALRN"/>
    <property type="match status" value="1"/>
</dbReference>
<dbReference type="Pfam" id="PF22697">
    <property type="entry name" value="SOS1_NGEF_PH"/>
    <property type="match status" value="2"/>
</dbReference>
<dbReference type="Pfam" id="PF00435">
    <property type="entry name" value="Spectrin"/>
    <property type="match status" value="4"/>
</dbReference>
<dbReference type="Pfam" id="PF23323">
    <property type="entry name" value="Spectrin_6"/>
    <property type="match status" value="1"/>
</dbReference>
<dbReference type="SMART" id="SM00060">
    <property type="entry name" value="FN3"/>
    <property type="match status" value="1"/>
</dbReference>
<dbReference type="SMART" id="SM00409">
    <property type="entry name" value="IG"/>
    <property type="match status" value="1"/>
</dbReference>
<dbReference type="SMART" id="SM00408">
    <property type="entry name" value="IGc2"/>
    <property type="match status" value="1"/>
</dbReference>
<dbReference type="SMART" id="SM00233">
    <property type="entry name" value="PH"/>
    <property type="match status" value="2"/>
</dbReference>
<dbReference type="SMART" id="SM00325">
    <property type="entry name" value="RhoGEF"/>
    <property type="match status" value="2"/>
</dbReference>
<dbReference type="SMART" id="SM00220">
    <property type="entry name" value="S_TKc"/>
    <property type="match status" value="1"/>
</dbReference>
<dbReference type="SMART" id="SM00516">
    <property type="entry name" value="SEC14"/>
    <property type="match status" value="1"/>
</dbReference>
<dbReference type="SMART" id="SM00326">
    <property type="entry name" value="SH3"/>
    <property type="match status" value="2"/>
</dbReference>
<dbReference type="SMART" id="SM00150">
    <property type="entry name" value="SPEC"/>
    <property type="match status" value="7"/>
</dbReference>
<dbReference type="SUPFAM" id="SSF52087">
    <property type="entry name" value="CRAL/TRIO domain"/>
    <property type="match status" value="1"/>
</dbReference>
<dbReference type="SUPFAM" id="SSF48065">
    <property type="entry name" value="DBL homology domain (DH-domain)"/>
    <property type="match status" value="2"/>
</dbReference>
<dbReference type="SUPFAM" id="SSF49265">
    <property type="entry name" value="Fibronectin type III"/>
    <property type="match status" value="1"/>
</dbReference>
<dbReference type="SUPFAM" id="SSF48726">
    <property type="entry name" value="Immunoglobulin"/>
    <property type="match status" value="1"/>
</dbReference>
<dbReference type="SUPFAM" id="SSF50729">
    <property type="entry name" value="PH domain-like"/>
    <property type="match status" value="2"/>
</dbReference>
<dbReference type="SUPFAM" id="SSF56112">
    <property type="entry name" value="Protein kinase-like (PK-like)"/>
    <property type="match status" value="1"/>
</dbReference>
<dbReference type="SUPFAM" id="SSF50044">
    <property type="entry name" value="SH3-domain"/>
    <property type="match status" value="2"/>
</dbReference>
<dbReference type="SUPFAM" id="SSF46966">
    <property type="entry name" value="Spectrin repeat"/>
    <property type="match status" value="6"/>
</dbReference>
<dbReference type="PROSITE" id="PS50191">
    <property type="entry name" value="CRAL_TRIO"/>
    <property type="match status" value="1"/>
</dbReference>
<dbReference type="PROSITE" id="PS50010">
    <property type="entry name" value="DH_2"/>
    <property type="match status" value="2"/>
</dbReference>
<dbReference type="PROSITE" id="PS50853">
    <property type="entry name" value="FN3"/>
    <property type="match status" value="1"/>
</dbReference>
<dbReference type="PROSITE" id="PS50835">
    <property type="entry name" value="IG_LIKE"/>
    <property type="match status" value="1"/>
</dbReference>
<dbReference type="PROSITE" id="PS50003">
    <property type="entry name" value="PH_DOMAIN"/>
    <property type="match status" value="2"/>
</dbReference>
<dbReference type="PROSITE" id="PS00107">
    <property type="entry name" value="PROTEIN_KINASE_ATP"/>
    <property type="match status" value="1"/>
</dbReference>
<dbReference type="PROSITE" id="PS50011">
    <property type="entry name" value="PROTEIN_KINASE_DOM"/>
    <property type="match status" value="1"/>
</dbReference>
<dbReference type="PROSITE" id="PS00108">
    <property type="entry name" value="PROTEIN_KINASE_ST"/>
    <property type="match status" value="1"/>
</dbReference>
<dbReference type="PROSITE" id="PS50002">
    <property type="entry name" value="SH3"/>
    <property type="match status" value="2"/>
</dbReference>
<accession>P97924</accession>
<accession>O70135</accession>
<accession>Q6IV51</accession>
<accession>Q9JIF1</accession>
<accession>Q9JIF2</accession>
<accession>Q9JIG0</accession>
<accession>Q9JIH3</accession>
<proteinExistence type="evidence at protein level"/>
<sequence length="2959" mass="336587">MVLSGSFRNDGLKASDVLPILKEKVAFVSGGRDKRGGPILTFPARTNHDRIRQEDLRKLVTNLASVPSEDVCKRGFTVIIDMRGSKWDLIKPLLKTLQEAFPAEIHVALIIKPDNFWQKQKTNFGSSKFIFETSMVSVEGLTKLVDPSQLTEEFDGSLDYNHEEWIELRLSLEEFFNSAVHLLSRLEDLQEMLARKEFPVDVEGSRRLIDEHTQLKKKVLKAPVEELDREGQRLLQCIRCSDGFSGRNCIPGSADFQSLVPKITSLLDKLHSTRQHLHQMWHVRKLKLDQCFQLRLFEQDAEKMFDWISHNKELFLQSHTEIGVSYQHALDLQTQHNHFAMNSMNAYVNINRIMSVASRLSEAGHYASQQIKQISTQLDQEWKSFAAALDERSTILAMSAVFHQKAEQFLSGVDAWCKMCSEGGLPSEMQDLELAIHHHQSLYEQVTQAYTEVSQDGKALLDVLQRPLSPGNSESLTATANYSKAVHQVLDVVHEVLHHQRRLESIWQHRKVRLHQRLQLCVFQQDVQQVLDWIENHGEAFLSKHTGVGKSLHRARALQKRHDDFEEVAQNTYTNADKLLEAAEQLAQTGECDPEEIYKAARHLEVRIQDFVRRVEQRKLLLDMSVSFHTHTKELWTWMEDLQKEVLEDVCADSVDAVQELIKQFQQQQTATLDATLNVIKEGEDLIQQLRSAPPSLGEPTEARDSAVSNNKTPHSSSISHIESVLQQLDDAQVQMEELFHERKIKLDIFLQLRIFEQYTIEVTAELDAWNEDLLRQMNDFNTEDLTLAEQRLQRHTERKLAMNNMTFEVIQQGQDLHQYIMEVQASGIELICEKDVDLAAQVQELLEFLHEKQHELELNAEQTHKRLEQCLQLRHLQAEVKQVLGWIRNGESMLNASLVNASSLSEAEQLQREHEQFQLAIEKTHQSALQVQQKAEALLQAGHYDADAIRECAEKVALHWQQLMLKMEDRLKLVNASVAFYKTSEQVCSVLESLEQEYRRDEDWCGGRDKLGPAAEMDHVIPLLSKHLEQKEAFLKACTLARRNAEVFLKYIHRNNVSMPSVASHTRGPEQQVKAILSELLQRENRVLHFWTLKKRRLDQCQQYVVFERSAKQALDWIQETGEYYLSTHTSTGETTEETQELLKEYGEFRVPAKQTKEKVKLLIQLADSFVEKGHIHATEIRKWVTTVDKHYRDFSLRMGKYRYTLEKALGVNTEDNKDLELDIIPASLSDREVKLRDANHEVNEEKRKSARKKEFIMAELLQTEKAYVRDLHECLETYLWEMTSGVEEIPPGILNKEHIIFGNIQEIYDFHNNIFLKELEKYEQLPEDVGHCFVTWADKFQMYVTYCKNKPDSNQLILEHAGTFFDEIQQRHGLANSISSYLIKPVQRVTKYQLLLKELLTCCEEGKGELKDGLEVMLSVPKKANDAMHVSMLEGFDENLDVQGELILQDAFQVWDPKSLIRKGRERHLFLFEISLVFSKEIKDSSGHTKYVYKNKLLTSELGVTEHVEGDPCKFALWSGRTPSSDNKTVLKASNIETKQEWIKNIREVIQERIIHLKGALKEPIQLPKTPAKLRNNSKRDGVEDGDSQGDGSSQPDTISIASRTSQNTVESDKLSGGCELTVVLQDFSAAHSSELSIQVGQTVELLERPSERPGWCLVRTTERSPPQEGLVPSSTLCISHSRSSVEMDCFFPLVKDSYSHSSGENGGKSESVANLQSQPSLNSIHSSPGPKRSTNTLKKWLTSPVRRLNSGKADGNIKKQKKVRDGRKSFDLGSPKPGDETTPQGDSADEKSKKGWGEDEPDEESHTPLPPPMKIFDNDPTQDEMSSLLAARQAPTDVPTAADLVSAIEKLVKSKLTLEGGSYRGSLKDPTVCLNEGMAPPTPPRNLEEEQKAKALRGRMFVLNELVQTEKDYVKDLGIVVEGFMKRIEEKGVPEDMRGKEKIVFGNIHQIYDWHKDFFLAELEKCIQEQDRLAQLFIKHERKLHIYVWYCQNKPRSEYIVAEYDAYFEEVKQEINQRLTLSDFLIKPIQRITKYQLLLKDFLRYSEKAGLECSDIEKAVELMCLVPKRCNDMMNLGRLQGFEGTLTAQGKLLQQDTFYVIELDAGMQSRTKERRVFLFEQIVIFSELLRKGSLTPGYMFKRSIKMNYLVLEEDVDDDPCKFALMNRETSERVILQAANSDIQQAWVQDINQVLETQRDFLNALQSPIEYQRKERSTAVIRSQPPRVPQASPRPYSSVPVGSEKPPKGSSYNPPLPPLKISTSNGSPGFDYHQPGDKFDASKQNDLGGCNGTSTMAVIKDYYALKENEICVSQGEVVQVLAVNQQNMCLVYQPASDHSPAAEGWVPGSILAPLTKATAPAESSDESIKKSCSWHTLRMRKRADVENTGKNEATGPRKPKDILGNKASVKETNSSEESECDDLDPNTSMEILNPNFIQEVAPEFLVPLVDVTCLLGDTVLLQCKACGRPKPTITWKGPDQNILDTDNSSATYTISSCDSGESTLKICNLMPQDSGIYTCIATNDHGTASTSATVKVQGVPAAPNRPIAQERSCTSVILRWLPPASTGNCTISGYTVEYREEGSQVWQQSVASTLDTYLVIEDLSPGCPYQFRVSASNPWGISLPSEPSEFVHLPEYDAAADGATISWKENFDSAYTELNEIGRGRFSIVKKCIHKATRKDVAVKFVSKKMKKKEQAAHEAALLQHLQHPQYVTLHDTYESPTSYILILELMDDGRLLDYLMNHDELMEEKVAFYIRDIMEALQYLHNCRVAHLDIKPENLLIDLRIPVPRVKLIDLEDAVQISGHFHIHHLLGNPEFAAPEVIQGIPVSLGTDIWSIGVLTYVMLSGVSPFLDESKEETCINVCRVDFSFPHEYFCGVSNAARDFINVILQEDFRRRPTAATCLQHPWLQPHNGSYSKIPLDTSRLACFIERRKHQNDVRPIPNVKSYIVNRVNQGT</sequence>
<protein>
    <recommendedName>
        <fullName evidence="23">Kalirin</fullName>
        <ecNumber>2.7.11.1</ecNumber>
    </recommendedName>
    <alternativeName>
        <fullName>Huntingtin-associated protein-interacting protein</fullName>
    </alternativeName>
    <alternativeName>
        <fullName>PAM COOH-terminal interactor protein 10</fullName>
        <shortName>P-CIP10</shortName>
    </alternativeName>
    <alternativeName>
        <fullName>Protein Duo</fullName>
    </alternativeName>
    <alternativeName>
        <fullName>Serine/threonine-protein kinase with Dbl- and pleckstrin homology domain</fullName>
    </alternativeName>
</protein>
<keyword id="KW-0002">3D-structure</keyword>
<keyword id="KW-0024">Alternative initiation</keyword>
<keyword id="KW-0025">Alternative splicing</keyword>
<keyword id="KW-0067">ATP-binding</keyword>
<keyword id="KW-0963">Cytoplasm</keyword>
<keyword id="KW-0206">Cytoskeleton</keyword>
<keyword id="KW-1015">Disulfide bond</keyword>
<keyword id="KW-0344">Guanine-nucleotide releasing factor</keyword>
<keyword id="KW-0393">Immunoglobulin domain</keyword>
<keyword id="KW-0418">Kinase</keyword>
<keyword id="KW-0460">Magnesium</keyword>
<keyword id="KW-0479">Metal-binding</keyword>
<keyword id="KW-0547">Nucleotide-binding</keyword>
<keyword id="KW-0597">Phosphoprotein</keyword>
<keyword id="KW-1185">Reference proteome</keyword>
<keyword id="KW-0677">Repeat</keyword>
<keyword id="KW-0723">Serine/threonine-protein kinase</keyword>
<keyword id="KW-0728">SH3 domain</keyword>
<keyword id="KW-0808">Transferase</keyword>